<evidence type="ECO:0000255" key="1">
    <source>
        <dbReference type="HAMAP-Rule" id="MF_00201"/>
    </source>
</evidence>
<protein>
    <recommendedName>
        <fullName evidence="1">DNA repair protein RecO</fullName>
    </recommendedName>
    <alternativeName>
        <fullName evidence="1">Recombination protein O</fullName>
    </alternativeName>
</protein>
<sequence length="248" mass="28665">MFQKVEGIVIRTTDYGETNKIVTIFSRELGKVSAMARGAKKPKSRLASVSQLMTHGHFLIQMGSGLGTLQQGEIISTMKEIREDIFLTAYASFIVELTDKATEDKKHNPYLFEMLYQTLHYMCEGVDPEVLSLIYQTKMLPVLGMRPYFDTCAICHQETDFVAFSVREGGFLCSRHAEQDQYRIPVGEAVHKLLRLFYHFDLHRLGNVSVKDSTKKQMRLVLNTYYDEYCGIYLKSRRFLEQLDKFQI</sequence>
<proteinExistence type="inferred from homology"/>
<comment type="function">
    <text evidence="1">Involved in DNA repair and RecF pathway recombination.</text>
</comment>
<comment type="similarity">
    <text evidence="1">Belongs to the RecO family.</text>
</comment>
<name>RECO_BACC7</name>
<gene>
    <name evidence="1" type="primary">recO</name>
    <name type="ordered locus">BCAH187_A4431</name>
</gene>
<reference key="1">
    <citation type="submission" date="2008-10" db="EMBL/GenBank/DDBJ databases">
        <title>Genome sequence of Bacillus cereus AH187.</title>
        <authorList>
            <person name="Dodson R.J."/>
            <person name="Durkin A.S."/>
            <person name="Rosovitz M.J."/>
            <person name="Rasko D.A."/>
            <person name="Kolsto A.B."/>
            <person name="Okstad O.A."/>
            <person name="Ravel J."/>
            <person name="Sutton G."/>
        </authorList>
    </citation>
    <scope>NUCLEOTIDE SEQUENCE [LARGE SCALE GENOMIC DNA]</scope>
    <source>
        <strain>AH187</strain>
    </source>
</reference>
<keyword id="KW-0227">DNA damage</keyword>
<keyword id="KW-0233">DNA recombination</keyword>
<keyword id="KW-0234">DNA repair</keyword>
<accession>B7HPJ7</accession>
<dbReference type="EMBL" id="CP001177">
    <property type="protein sequence ID" value="ACJ77307.1"/>
    <property type="molecule type" value="Genomic_DNA"/>
</dbReference>
<dbReference type="SMR" id="B7HPJ7"/>
<dbReference type="KEGG" id="bcr:BCAH187_A4431"/>
<dbReference type="HOGENOM" id="CLU_066632_4_0_9"/>
<dbReference type="Proteomes" id="UP000002214">
    <property type="component" value="Chromosome"/>
</dbReference>
<dbReference type="GO" id="GO:0043590">
    <property type="term" value="C:bacterial nucleoid"/>
    <property type="evidence" value="ECO:0007669"/>
    <property type="project" value="TreeGrafter"/>
</dbReference>
<dbReference type="GO" id="GO:0006310">
    <property type="term" value="P:DNA recombination"/>
    <property type="evidence" value="ECO:0007669"/>
    <property type="project" value="UniProtKB-UniRule"/>
</dbReference>
<dbReference type="GO" id="GO:0006302">
    <property type="term" value="P:double-strand break repair"/>
    <property type="evidence" value="ECO:0007669"/>
    <property type="project" value="TreeGrafter"/>
</dbReference>
<dbReference type="Gene3D" id="2.40.50.140">
    <property type="entry name" value="Nucleic acid-binding proteins"/>
    <property type="match status" value="1"/>
</dbReference>
<dbReference type="Gene3D" id="1.20.1440.120">
    <property type="entry name" value="Recombination protein O, C-terminal domain"/>
    <property type="match status" value="1"/>
</dbReference>
<dbReference type="HAMAP" id="MF_00201">
    <property type="entry name" value="RecO"/>
    <property type="match status" value="1"/>
</dbReference>
<dbReference type="InterPro" id="IPR037278">
    <property type="entry name" value="ARFGAP/RecO"/>
</dbReference>
<dbReference type="InterPro" id="IPR022572">
    <property type="entry name" value="DNA_rep/recomb_RecO_N"/>
</dbReference>
<dbReference type="InterPro" id="IPR012340">
    <property type="entry name" value="NA-bd_OB-fold"/>
</dbReference>
<dbReference type="InterPro" id="IPR003717">
    <property type="entry name" value="RecO"/>
</dbReference>
<dbReference type="InterPro" id="IPR042242">
    <property type="entry name" value="RecO_C"/>
</dbReference>
<dbReference type="NCBIfam" id="TIGR00613">
    <property type="entry name" value="reco"/>
    <property type="match status" value="1"/>
</dbReference>
<dbReference type="PANTHER" id="PTHR33991">
    <property type="entry name" value="DNA REPAIR PROTEIN RECO"/>
    <property type="match status" value="1"/>
</dbReference>
<dbReference type="PANTHER" id="PTHR33991:SF1">
    <property type="entry name" value="DNA REPAIR PROTEIN RECO"/>
    <property type="match status" value="1"/>
</dbReference>
<dbReference type="Pfam" id="PF02565">
    <property type="entry name" value="RecO_C"/>
    <property type="match status" value="1"/>
</dbReference>
<dbReference type="Pfam" id="PF11967">
    <property type="entry name" value="RecO_N"/>
    <property type="match status" value="1"/>
</dbReference>
<dbReference type="SUPFAM" id="SSF57863">
    <property type="entry name" value="ArfGap/RecO-like zinc finger"/>
    <property type="match status" value="1"/>
</dbReference>
<dbReference type="SUPFAM" id="SSF50249">
    <property type="entry name" value="Nucleic acid-binding proteins"/>
    <property type="match status" value="1"/>
</dbReference>
<feature type="chain" id="PRO_1000118710" description="DNA repair protein RecO">
    <location>
        <begin position="1"/>
        <end position="248"/>
    </location>
</feature>
<organism>
    <name type="scientific">Bacillus cereus (strain AH187)</name>
    <dbReference type="NCBI Taxonomy" id="405534"/>
    <lineage>
        <taxon>Bacteria</taxon>
        <taxon>Bacillati</taxon>
        <taxon>Bacillota</taxon>
        <taxon>Bacilli</taxon>
        <taxon>Bacillales</taxon>
        <taxon>Bacillaceae</taxon>
        <taxon>Bacillus</taxon>
        <taxon>Bacillus cereus group</taxon>
    </lineage>
</organism>